<feature type="chain" id="PRO_1000122669" description="ATP phosphoribosyltransferase regulatory subunit">
    <location>
        <begin position="1"/>
        <end position="382"/>
    </location>
</feature>
<organism>
    <name type="scientific">Acidovorax ebreus (strain TPSY)</name>
    <name type="common">Diaphorobacter sp. (strain TPSY)</name>
    <dbReference type="NCBI Taxonomy" id="535289"/>
    <lineage>
        <taxon>Bacteria</taxon>
        <taxon>Pseudomonadati</taxon>
        <taxon>Pseudomonadota</taxon>
        <taxon>Betaproteobacteria</taxon>
        <taxon>Burkholderiales</taxon>
        <taxon>Comamonadaceae</taxon>
        <taxon>Diaphorobacter</taxon>
    </lineage>
</organism>
<reference key="1">
    <citation type="submission" date="2009-01" db="EMBL/GenBank/DDBJ databases">
        <title>Complete sequence of Diaphorobacter sp. TPSY.</title>
        <authorList>
            <consortium name="US DOE Joint Genome Institute"/>
            <person name="Lucas S."/>
            <person name="Copeland A."/>
            <person name="Lapidus A."/>
            <person name="Glavina del Rio T."/>
            <person name="Tice H."/>
            <person name="Bruce D."/>
            <person name="Goodwin L."/>
            <person name="Pitluck S."/>
            <person name="Chertkov O."/>
            <person name="Brettin T."/>
            <person name="Detter J.C."/>
            <person name="Han C."/>
            <person name="Larimer F."/>
            <person name="Land M."/>
            <person name="Hauser L."/>
            <person name="Kyrpides N."/>
            <person name="Mikhailova N."/>
            <person name="Coates J.D."/>
        </authorList>
    </citation>
    <scope>NUCLEOTIDE SEQUENCE [LARGE SCALE GENOMIC DNA]</scope>
    <source>
        <strain>TPSY</strain>
    </source>
</reference>
<gene>
    <name evidence="1" type="primary">hisZ</name>
    <name type="ordered locus">Dtpsy_1100</name>
</gene>
<comment type="function">
    <text evidence="1">Required for the first step of histidine biosynthesis. May allow the feedback regulation of ATP phosphoribosyltransferase activity by histidine.</text>
</comment>
<comment type="pathway">
    <text evidence="1">Amino-acid biosynthesis; L-histidine biosynthesis; L-histidine from 5-phospho-alpha-D-ribose 1-diphosphate: step 1/9.</text>
</comment>
<comment type="subunit">
    <text evidence="1">Heteromultimer composed of HisG and HisZ subunits.</text>
</comment>
<comment type="subcellular location">
    <subcellularLocation>
        <location evidence="1">Cytoplasm</location>
    </subcellularLocation>
</comment>
<comment type="miscellaneous">
    <text>This function is generally fulfilled by the C-terminal part of HisG, which is missing in some bacteria such as this one.</text>
</comment>
<comment type="similarity">
    <text evidence="1">Belongs to the class-II aminoacyl-tRNA synthetase family. HisZ subfamily.</text>
</comment>
<protein>
    <recommendedName>
        <fullName evidence="1">ATP phosphoribosyltransferase regulatory subunit</fullName>
    </recommendedName>
</protein>
<sequence>MSAWVLPDHIADVLPSEARHIEELRRGLLDTARSYGYELVMPPLLEHLESLLTGTGEALDLQTFKLVDQLSGRSLGLRADTTQQVARIDAHLLNRQGVARLCYCGPVLHTRPDRPHATREPLQFGAEIYGHPGIEADIEAVLLSLECLRSAHAQEVSVDLADVRIVRSLLAGLPVGMHQLAQVHGALAAKDASELASLTRDFPSASREGLLALLQLYGDATVLNEAENLLKPFPGAREALSDLRAIAARMDGVRVTFDLADLRGYAYYSGARFAIYAQGASDALVRGGRYDEVGAVFGRNRPAAGFSLDVKQLVGVVSAPSLRAAIRAPWGDGGALSAAIATLRRQGETVVCVLPGHGSEVDEFHCDRELVLVDGNWVVKAI</sequence>
<evidence type="ECO:0000255" key="1">
    <source>
        <dbReference type="HAMAP-Rule" id="MF_00125"/>
    </source>
</evidence>
<dbReference type="EMBL" id="CP001392">
    <property type="protein sequence ID" value="ACM32577.1"/>
    <property type="molecule type" value="Genomic_DNA"/>
</dbReference>
<dbReference type="RefSeq" id="WP_015912798.1">
    <property type="nucleotide sequence ID" value="NC_011992.1"/>
</dbReference>
<dbReference type="SMR" id="B9MFY6"/>
<dbReference type="KEGG" id="dia:Dtpsy_1100"/>
<dbReference type="eggNOG" id="COG3705">
    <property type="taxonomic scope" value="Bacteria"/>
</dbReference>
<dbReference type="HOGENOM" id="CLU_025113_0_1_4"/>
<dbReference type="UniPathway" id="UPA00031">
    <property type="reaction ID" value="UER00006"/>
</dbReference>
<dbReference type="Proteomes" id="UP000000450">
    <property type="component" value="Chromosome"/>
</dbReference>
<dbReference type="GO" id="GO:0005737">
    <property type="term" value="C:cytoplasm"/>
    <property type="evidence" value="ECO:0007669"/>
    <property type="project" value="UniProtKB-SubCell"/>
</dbReference>
<dbReference type="GO" id="GO:0004821">
    <property type="term" value="F:histidine-tRNA ligase activity"/>
    <property type="evidence" value="ECO:0007669"/>
    <property type="project" value="TreeGrafter"/>
</dbReference>
<dbReference type="GO" id="GO:0006427">
    <property type="term" value="P:histidyl-tRNA aminoacylation"/>
    <property type="evidence" value="ECO:0007669"/>
    <property type="project" value="TreeGrafter"/>
</dbReference>
<dbReference type="GO" id="GO:0000105">
    <property type="term" value="P:L-histidine biosynthetic process"/>
    <property type="evidence" value="ECO:0007669"/>
    <property type="project" value="UniProtKB-UniRule"/>
</dbReference>
<dbReference type="CDD" id="cd00773">
    <property type="entry name" value="HisRS-like_core"/>
    <property type="match status" value="1"/>
</dbReference>
<dbReference type="Gene3D" id="3.30.930.10">
    <property type="entry name" value="Bira Bifunctional Protein, Domain 2"/>
    <property type="match status" value="1"/>
</dbReference>
<dbReference type="HAMAP" id="MF_00125">
    <property type="entry name" value="HisZ"/>
    <property type="match status" value="1"/>
</dbReference>
<dbReference type="InterPro" id="IPR045864">
    <property type="entry name" value="aa-tRNA-synth_II/BPL/LPL"/>
</dbReference>
<dbReference type="InterPro" id="IPR041715">
    <property type="entry name" value="HisRS-like_core"/>
</dbReference>
<dbReference type="InterPro" id="IPR004516">
    <property type="entry name" value="HisRS/HisZ"/>
</dbReference>
<dbReference type="InterPro" id="IPR004517">
    <property type="entry name" value="HisZ"/>
</dbReference>
<dbReference type="NCBIfam" id="NF008935">
    <property type="entry name" value="PRK12292.1-1"/>
    <property type="match status" value="1"/>
</dbReference>
<dbReference type="NCBIfam" id="NF009086">
    <property type="entry name" value="PRK12421.1"/>
    <property type="match status" value="1"/>
</dbReference>
<dbReference type="PANTHER" id="PTHR43707:SF1">
    <property type="entry name" value="HISTIDINE--TRNA LIGASE, MITOCHONDRIAL-RELATED"/>
    <property type="match status" value="1"/>
</dbReference>
<dbReference type="PANTHER" id="PTHR43707">
    <property type="entry name" value="HISTIDYL-TRNA SYNTHETASE"/>
    <property type="match status" value="1"/>
</dbReference>
<dbReference type="Pfam" id="PF13393">
    <property type="entry name" value="tRNA-synt_His"/>
    <property type="match status" value="1"/>
</dbReference>
<dbReference type="PIRSF" id="PIRSF001549">
    <property type="entry name" value="His-tRNA_synth"/>
    <property type="match status" value="1"/>
</dbReference>
<dbReference type="SUPFAM" id="SSF55681">
    <property type="entry name" value="Class II aaRS and biotin synthetases"/>
    <property type="match status" value="1"/>
</dbReference>
<keyword id="KW-0028">Amino-acid biosynthesis</keyword>
<keyword id="KW-0963">Cytoplasm</keyword>
<keyword id="KW-0368">Histidine biosynthesis</keyword>
<keyword id="KW-1185">Reference proteome</keyword>
<accession>B9MFY6</accession>
<name>HISZ_ACIET</name>
<proteinExistence type="inferred from homology"/>